<sequence>MAEDTYSHKMVKTNHRRCRTKFTEEQLKILINTFNQKPYPGYATKQKLALEINTEESRIQIWFQNRRARHGFQKRPEAETLESSQSQGQDQPGVEFQSREARRCRTTYSASQLHTLIKAFMKNPYPGIDSREELAKEIGVPESRVQIWFQNRRSRLLLQRKREPVASLEQEEQGKIPEGLQGAEDTQNGTNFTSDSHFSGARTW</sequence>
<comment type="function">
    <text evidence="3">Transcription factor that acts as a repressor.</text>
</comment>
<comment type="subcellular location">
    <subcellularLocation>
        <location evidence="1">Nucleus</location>
    </subcellularLocation>
</comment>
<comment type="tissue specificity">
    <text evidence="3">Expressed in embryonic stem cells.</text>
</comment>
<comment type="developmental stage">
    <text evidence="3">Expressed in single blastomeres from 8-cell stage embryos.</text>
</comment>
<comment type="similarity">
    <text evidence="4">Belongs to the paired homeobox family.</text>
</comment>
<protein>
    <recommendedName>
        <fullName evidence="4">Double homeobox protein A</fullName>
    </recommendedName>
</protein>
<keyword id="KW-0238">DNA-binding</keyword>
<keyword id="KW-0371">Homeobox</keyword>
<keyword id="KW-0539">Nucleus</keyword>
<keyword id="KW-1185">Reference proteome</keyword>
<keyword id="KW-0677">Repeat</keyword>
<keyword id="KW-0678">Repressor</keyword>
<keyword id="KW-0804">Transcription</keyword>
<keyword id="KW-0805">Transcription regulation</keyword>
<evidence type="ECO:0000255" key="1">
    <source>
        <dbReference type="PROSITE-ProRule" id="PRU00108"/>
    </source>
</evidence>
<evidence type="ECO:0000256" key="2">
    <source>
        <dbReference type="SAM" id="MobiDB-lite"/>
    </source>
</evidence>
<evidence type="ECO:0000269" key="3">
    <source>
    </source>
</evidence>
<evidence type="ECO:0000305" key="4"/>
<evidence type="ECO:0000312" key="5">
    <source>
        <dbReference type="HGNC" id="HGNC:32179"/>
    </source>
</evidence>
<dbReference type="EMBL" id="AC025588">
    <property type="status" value="NOT_ANNOTATED_CDS"/>
    <property type="molecule type" value="Genomic_DNA"/>
</dbReference>
<dbReference type="CCDS" id="CCDS33126.1"/>
<dbReference type="RefSeq" id="NP_001012747.1">
    <property type="nucleotide sequence ID" value="NM_001012729.2"/>
</dbReference>
<dbReference type="SMR" id="A6NLW8"/>
<dbReference type="BioGRID" id="139050">
    <property type="interactions" value="11"/>
</dbReference>
<dbReference type="FunCoup" id="A6NLW8">
    <property type="interactions" value="7"/>
</dbReference>
<dbReference type="STRING" id="9606.ENSP00000452398"/>
<dbReference type="iPTMnet" id="A6NLW8"/>
<dbReference type="PhosphoSitePlus" id="A6NLW8"/>
<dbReference type="BioMuta" id="DUXA"/>
<dbReference type="MassIVE" id="A6NLW8"/>
<dbReference type="PaxDb" id="9606-ENSP00000452398"/>
<dbReference type="PeptideAtlas" id="A6NLW8"/>
<dbReference type="ProteomicsDB" id="1495"/>
<dbReference type="Antibodypedia" id="59168">
    <property type="antibodies" value="22 antibodies from 10 providers"/>
</dbReference>
<dbReference type="DNASU" id="503835"/>
<dbReference type="Ensembl" id="ENST00000554048.3">
    <property type="protein sequence ID" value="ENSP00000452398.1"/>
    <property type="gene ID" value="ENSG00000258873.3"/>
</dbReference>
<dbReference type="GeneID" id="503835"/>
<dbReference type="KEGG" id="hsa:503835"/>
<dbReference type="MANE-Select" id="ENST00000554048.3">
    <property type="protein sequence ID" value="ENSP00000452398.1"/>
    <property type="RefSeq nucleotide sequence ID" value="NM_001012729.2"/>
    <property type="RefSeq protein sequence ID" value="NP_001012747.1"/>
</dbReference>
<dbReference type="UCSC" id="uc002qoa.2">
    <property type="organism name" value="human"/>
</dbReference>
<dbReference type="AGR" id="HGNC:32179"/>
<dbReference type="CTD" id="503835"/>
<dbReference type="DisGeNET" id="503835"/>
<dbReference type="GeneCards" id="DUXA"/>
<dbReference type="HGNC" id="HGNC:32179">
    <property type="gene designation" value="DUXA"/>
</dbReference>
<dbReference type="HPA" id="ENSG00000258873">
    <property type="expression patterns" value="Not detected"/>
</dbReference>
<dbReference type="MIM" id="611168">
    <property type="type" value="gene"/>
</dbReference>
<dbReference type="neXtProt" id="NX_A6NLW8"/>
<dbReference type="OpenTargets" id="ENSG00000258873"/>
<dbReference type="PharmGKB" id="PA142671924"/>
<dbReference type="VEuPathDB" id="HostDB:ENSG00000258873"/>
<dbReference type="eggNOG" id="KOG0490">
    <property type="taxonomic scope" value="Eukaryota"/>
</dbReference>
<dbReference type="GeneTree" id="ENSGT00940000163365"/>
<dbReference type="HOGENOM" id="CLU_049543_1_0_1"/>
<dbReference type="InParanoid" id="A6NLW8"/>
<dbReference type="OMA" id="SHKMVTT"/>
<dbReference type="OrthoDB" id="3225452at2759"/>
<dbReference type="PAN-GO" id="A6NLW8">
    <property type="GO annotations" value="4 GO annotations based on evolutionary models"/>
</dbReference>
<dbReference type="PhylomeDB" id="A6NLW8"/>
<dbReference type="TreeFam" id="TF340750"/>
<dbReference type="PathwayCommons" id="A6NLW8"/>
<dbReference type="Reactome" id="R-HSA-9819196">
    <property type="pathway name" value="Zygotic genome activation (ZGA)"/>
</dbReference>
<dbReference type="BioGRID-ORCS" id="503835">
    <property type="hits" value="271 hits in 1135 CRISPR screens"/>
</dbReference>
<dbReference type="ChiTaRS" id="DUXA">
    <property type="organism name" value="human"/>
</dbReference>
<dbReference type="GenomeRNAi" id="503835"/>
<dbReference type="Pharos" id="A6NLW8">
    <property type="development level" value="Tdark"/>
</dbReference>
<dbReference type="PRO" id="PR:A6NLW8"/>
<dbReference type="Proteomes" id="UP000005640">
    <property type="component" value="Chromosome 19"/>
</dbReference>
<dbReference type="RNAct" id="A6NLW8">
    <property type="molecule type" value="protein"/>
</dbReference>
<dbReference type="Bgee" id="ENSG00000258873">
    <property type="expression patterns" value="Expressed in calcaneal tendon and 15 other cell types or tissues"/>
</dbReference>
<dbReference type="GO" id="GO:0000785">
    <property type="term" value="C:chromatin"/>
    <property type="evidence" value="ECO:0000247"/>
    <property type="project" value="NTNU_SB"/>
</dbReference>
<dbReference type="GO" id="GO:0005654">
    <property type="term" value="C:nucleoplasm"/>
    <property type="evidence" value="ECO:0000304"/>
    <property type="project" value="Reactome"/>
</dbReference>
<dbReference type="GO" id="GO:0005634">
    <property type="term" value="C:nucleus"/>
    <property type="evidence" value="ECO:0000318"/>
    <property type="project" value="GO_Central"/>
</dbReference>
<dbReference type="GO" id="GO:0000981">
    <property type="term" value="F:DNA-binding transcription factor activity, RNA polymerase II-specific"/>
    <property type="evidence" value="ECO:0000247"/>
    <property type="project" value="NTNU_SB"/>
</dbReference>
<dbReference type="GO" id="GO:0000977">
    <property type="term" value="F:RNA polymerase II transcription regulatory region sequence-specific DNA binding"/>
    <property type="evidence" value="ECO:0000318"/>
    <property type="project" value="GO_Central"/>
</dbReference>
<dbReference type="GO" id="GO:1990837">
    <property type="term" value="F:sequence-specific double-stranded DNA binding"/>
    <property type="evidence" value="ECO:0000314"/>
    <property type="project" value="ARUK-UCL"/>
</dbReference>
<dbReference type="GO" id="GO:0006357">
    <property type="term" value="P:regulation of transcription by RNA polymerase II"/>
    <property type="evidence" value="ECO:0000318"/>
    <property type="project" value="GO_Central"/>
</dbReference>
<dbReference type="CDD" id="cd00086">
    <property type="entry name" value="homeodomain"/>
    <property type="match status" value="2"/>
</dbReference>
<dbReference type="FunFam" id="1.10.10.60:FF:000325">
    <property type="entry name" value="Double homeobox protein 4"/>
    <property type="match status" value="1"/>
</dbReference>
<dbReference type="FunFam" id="1.10.10.60:FF:000354">
    <property type="entry name" value="Double homeobox protein 4"/>
    <property type="match status" value="1"/>
</dbReference>
<dbReference type="Gene3D" id="1.10.10.60">
    <property type="entry name" value="Homeodomain-like"/>
    <property type="match status" value="2"/>
</dbReference>
<dbReference type="InterPro" id="IPR001356">
    <property type="entry name" value="HD"/>
</dbReference>
<dbReference type="InterPro" id="IPR051306">
    <property type="entry name" value="Homeobox_regulator"/>
</dbReference>
<dbReference type="InterPro" id="IPR009057">
    <property type="entry name" value="Homeodomain-like_sf"/>
</dbReference>
<dbReference type="InterPro" id="IPR000047">
    <property type="entry name" value="HTH_motif"/>
</dbReference>
<dbReference type="PANTHER" id="PTHR46123:SF7">
    <property type="entry name" value="DOUBLE HOMEOBOX PROTEIN A"/>
    <property type="match status" value="1"/>
</dbReference>
<dbReference type="PANTHER" id="PTHR46123">
    <property type="entry name" value="MIX-TYPE HOMEOBOX GENE 1-RELATED"/>
    <property type="match status" value="1"/>
</dbReference>
<dbReference type="Pfam" id="PF00046">
    <property type="entry name" value="Homeodomain"/>
    <property type="match status" value="2"/>
</dbReference>
<dbReference type="PRINTS" id="PR00031">
    <property type="entry name" value="HTHREPRESSR"/>
</dbReference>
<dbReference type="SMART" id="SM00389">
    <property type="entry name" value="HOX"/>
    <property type="match status" value="2"/>
</dbReference>
<dbReference type="SUPFAM" id="SSF46689">
    <property type="entry name" value="Homeodomain-like"/>
    <property type="match status" value="2"/>
</dbReference>
<dbReference type="PROSITE" id="PS50071">
    <property type="entry name" value="HOMEOBOX_2"/>
    <property type="match status" value="2"/>
</dbReference>
<reference key="1">
    <citation type="journal article" date="2004" name="Nature">
        <title>The DNA sequence and biology of human chromosome 19.</title>
        <authorList>
            <person name="Grimwood J."/>
            <person name="Gordon L.A."/>
            <person name="Olsen A.S."/>
            <person name="Terry A."/>
            <person name="Schmutz J."/>
            <person name="Lamerdin J.E."/>
            <person name="Hellsten U."/>
            <person name="Goodstein D."/>
            <person name="Couronne O."/>
            <person name="Tran-Gyamfi M."/>
            <person name="Aerts A."/>
            <person name="Altherr M."/>
            <person name="Ashworth L."/>
            <person name="Bajorek E."/>
            <person name="Black S."/>
            <person name="Branscomb E."/>
            <person name="Caenepeel S."/>
            <person name="Carrano A.V."/>
            <person name="Caoile C."/>
            <person name="Chan Y.M."/>
            <person name="Christensen M."/>
            <person name="Cleland C.A."/>
            <person name="Copeland A."/>
            <person name="Dalin E."/>
            <person name="Dehal P."/>
            <person name="Denys M."/>
            <person name="Detter J.C."/>
            <person name="Escobar J."/>
            <person name="Flowers D."/>
            <person name="Fotopulos D."/>
            <person name="Garcia C."/>
            <person name="Georgescu A.M."/>
            <person name="Glavina T."/>
            <person name="Gomez M."/>
            <person name="Gonzales E."/>
            <person name="Groza M."/>
            <person name="Hammon N."/>
            <person name="Hawkins T."/>
            <person name="Haydu L."/>
            <person name="Ho I."/>
            <person name="Huang W."/>
            <person name="Israni S."/>
            <person name="Jett J."/>
            <person name="Kadner K."/>
            <person name="Kimball H."/>
            <person name="Kobayashi A."/>
            <person name="Larionov V."/>
            <person name="Leem S.-H."/>
            <person name="Lopez F."/>
            <person name="Lou Y."/>
            <person name="Lowry S."/>
            <person name="Malfatti S."/>
            <person name="Martinez D."/>
            <person name="McCready P.M."/>
            <person name="Medina C."/>
            <person name="Morgan J."/>
            <person name="Nelson K."/>
            <person name="Nolan M."/>
            <person name="Ovcharenko I."/>
            <person name="Pitluck S."/>
            <person name="Pollard M."/>
            <person name="Popkie A.P."/>
            <person name="Predki P."/>
            <person name="Quan G."/>
            <person name="Ramirez L."/>
            <person name="Rash S."/>
            <person name="Retterer J."/>
            <person name="Rodriguez A."/>
            <person name="Rogers S."/>
            <person name="Salamov A."/>
            <person name="Salazar A."/>
            <person name="She X."/>
            <person name="Smith D."/>
            <person name="Slezak T."/>
            <person name="Solovyev V."/>
            <person name="Thayer N."/>
            <person name="Tice H."/>
            <person name="Tsai M."/>
            <person name="Ustaszewska A."/>
            <person name="Vo N."/>
            <person name="Wagner M."/>
            <person name="Wheeler J."/>
            <person name="Wu K."/>
            <person name="Xie G."/>
            <person name="Yang J."/>
            <person name="Dubchak I."/>
            <person name="Furey T.S."/>
            <person name="DeJong P."/>
            <person name="Dickson M."/>
            <person name="Gordon D."/>
            <person name="Eichler E.E."/>
            <person name="Pennacchio L.A."/>
            <person name="Richardson P."/>
            <person name="Stubbs L."/>
            <person name="Rokhsar D.S."/>
            <person name="Myers R.M."/>
            <person name="Rubin E.M."/>
            <person name="Lucas S.M."/>
        </authorList>
    </citation>
    <scope>NUCLEOTIDE SEQUENCE [LARGE SCALE GENOMIC DNA]</scope>
</reference>
<reference key="2">
    <citation type="journal article" date="2007" name="Gene">
        <title>Annotation, nomenclature and evolution of four novel homeobox genes expressed in the human germ line.</title>
        <authorList>
            <person name="Booth H.A."/>
            <person name="Holland P.W.H."/>
        </authorList>
    </citation>
    <scope>IDENTIFICATION</scope>
</reference>
<reference key="3">
    <citation type="journal article" date="2016" name="Sci. Rep.">
        <title>Characterization and target genes of nine human PRD-like homeobox domain genes expressed exclusively in early embryos.</title>
        <authorList>
            <person name="Madissoon E."/>
            <person name="Jouhilahti E.M."/>
            <person name="Vesterlund L."/>
            <person name="Toehoenen V."/>
            <person name="Krjutskov K."/>
            <person name="Petropoulos S."/>
            <person name="Einarsdottir E."/>
            <person name="Linnarsson S."/>
            <person name="Lanner F."/>
            <person name="Maansson R."/>
            <person name="Hovatta O."/>
            <person name="Buerglin T.R."/>
            <person name="Katayama S."/>
            <person name="Kere J."/>
        </authorList>
    </citation>
    <scope>FUNCTION</scope>
    <scope>DEVELOPMENTAL STAGE</scope>
    <scope>TISSUE SPECIFICITY</scope>
</reference>
<name>DUXA_HUMAN</name>
<accession>A6NLW8</accession>
<gene>
    <name evidence="5" type="primary">DUXA</name>
</gene>
<proteinExistence type="evidence at transcript level"/>
<organism>
    <name type="scientific">Homo sapiens</name>
    <name type="common">Human</name>
    <dbReference type="NCBI Taxonomy" id="9606"/>
    <lineage>
        <taxon>Eukaryota</taxon>
        <taxon>Metazoa</taxon>
        <taxon>Chordata</taxon>
        <taxon>Craniata</taxon>
        <taxon>Vertebrata</taxon>
        <taxon>Euteleostomi</taxon>
        <taxon>Mammalia</taxon>
        <taxon>Eutheria</taxon>
        <taxon>Euarchontoglires</taxon>
        <taxon>Primates</taxon>
        <taxon>Haplorrhini</taxon>
        <taxon>Catarrhini</taxon>
        <taxon>Hominidae</taxon>
        <taxon>Homo</taxon>
    </lineage>
</organism>
<feature type="chain" id="PRO_0000311327" description="Double homeobox protein A">
    <location>
        <begin position="1"/>
        <end position="204"/>
    </location>
</feature>
<feature type="DNA-binding region" description="Homeobox 1" evidence="1">
    <location>
        <begin position="15"/>
        <end position="74"/>
    </location>
</feature>
<feature type="DNA-binding region" description="Homeobox 2" evidence="1">
    <location>
        <begin position="101"/>
        <end position="160"/>
    </location>
</feature>
<feature type="region of interest" description="Disordered" evidence="2">
    <location>
        <begin position="73"/>
        <end position="101"/>
    </location>
</feature>
<feature type="region of interest" description="Disordered" evidence="2">
    <location>
        <begin position="163"/>
        <end position="204"/>
    </location>
</feature>
<feature type="compositionally biased region" description="Polar residues" evidence="2">
    <location>
        <begin position="81"/>
        <end position="90"/>
    </location>
</feature>
<feature type="compositionally biased region" description="Polar residues" evidence="2">
    <location>
        <begin position="184"/>
        <end position="197"/>
    </location>
</feature>